<sequence length="341" mass="37303">MKALSKLKAEEGIWMTDVPQPELGHNDIMIKIRKTAICGTDVHIYNWDEWSQKTIPVPMVVGHEYVGEVVAIGQEVKGFNIGDRVSGEGHITCGHCRNCRGGRTHLCRNTVGVGVNRPGSFAEYLVIPAFNAFKIPDNISDELAAIFDPFGNAVHTALSFDLVGEDVLVSGAGPIGIMAAAVCKHVGARHVVIADVNEYRLDLARKMGVTRAVNVSKENLNDVMTELGMTEGFDVGLEMSGAPPAFRSLLNSMNHGGRIAMLGIPPSDMSIDWNQVIFKGLFIKGIYGREMFETWYKMAALIQSGLDLTPIITHRFPIDEFQQGFDAMRSGKSGKVVLSWD</sequence>
<evidence type="ECO:0000255" key="1">
    <source>
        <dbReference type="HAMAP-Rule" id="MF_00627"/>
    </source>
</evidence>
<feature type="chain" id="PRO_1000051671" description="L-threonine 3-dehydrogenase">
    <location>
        <begin position="1"/>
        <end position="341"/>
    </location>
</feature>
<feature type="active site" description="Charge relay system" evidence="1">
    <location>
        <position position="40"/>
    </location>
</feature>
<feature type="active site" description="Charge relay system" evidence="1">
    <location>
        <position position="43"/>
    </location>
</feature>
<feature type="binding site" evidence="1">
    <location>
        <position position="38"/>
    </location>
    <ligand>
        <name>Zn(2+)</name>
        <dbReference type="ChEBI" id="CHEBI:29105"/>
        <label>1</label>
        <note>catalytic</note>
    </ligand>
</feature>
<feature type="binding site" evidence="1">
    <location>
        <position position="63"/>
    </location>
    <ligand>
        <name>Zn(2+)</name>
        <dbReference type="ChEBI" id="CHEBI:29105"/>
        <label>1</label>
        <note>catalytic</note>
    </ligand>
</feature>
<feature type="binding site" evidence="1">
    <location>
        <position position="64"/>
    </location>
    <ligand>
        <name>Zn(2+)</name>
        <dbReference type="ChEBI" id="CHEBI:29105"/>
        <label>1</label>
        <note>catalytic</note>
    </ligand>
</feature>
<feature type="binding site" evidence="1">
    <location>
        <position position="93"/>
    </location>
    <ligand>
        <name>Zn(2+)</name>
        <dbReference type="ChEBI" id="CHEBI:29105"/>
        <label>2</label>
    </ligand>
</feature>
<feature type="binding site" evidence="1">
    <location>
        <position position="96"/>
    </location>
    <ligand>
        <name>Zn(2+)</name>
        <dbReference type="ChEBI" id="CHEBI:29105"/>
        <label>2</label>
    </ligand>
</feature>
<feature type="binding site" evidence="1">
    <location>
        <position position="99"/>
    </location>
    <ligand>
        <name>Zn(2+)</name>
        <dbReference type="ChEBI" id="CHEBI:29105"/>
        <label>2</label>
    </ligand>
</feature>
<feature type="binding site" evidence="1">
    <location>
        <position position="107"/>
    </location>
    <ligand>
        <name>Zn(2+)</name>
        <dbReference type="ChEBI" id="CHEBI:29105"/>
        <label>2</label>
    </ligand>
</feature>
<feature type="binding site" evidence="1">
    <location>
        <position position="175"/>
    </location>
    <ligand>
        <name>NAD(+)</name>
        <dbReference type="ChEBI" id="CHEBI:57540"/>
    </ligand>
</feature>
<feature type="binding site" evidence="1">
    <location>
        <position position="195"/>
    </location>
    <ligand>
        <name>NAD(+)</name>
        <dbReference type="ChEBI" id="CHEBI:57540"/>
    </ligand>
</feature>
<feature type="binding site" evidence="1">
    <location>
        <position position="200"/>
    </location>
    <ligand>
        <name>NAD(+)</name>
        <dbReference type="ChEBI" id="CHEBI:57540"/>
    </ligand>
</feature>
<feature type="binding site" evidence="1">
    <location>
        <begin position="262"/>
        <end position="264"/>
    </location>
    <ligand>
        <name>NAD(+)</name>
        <dbReference type="ChEBI" id="CHEBI:57540"/>
    </ligand>
</feature>
<feature type="binding site" evidence="1">
    <location>
        <begin position="286"/>
        <end position="287"/>
    </location>
    <ligand>
        <name>NAD(+)</name>
        <dbReference type="ChEBI" id="CHEBI:57540"/>
    </ligand>
</feature>
<feature type="site" description="Important for catalytic activity for the proton relay mechanism but does not participate directly in the coordination of zinc atom" evidence="1">
    <location>
        <position position="148"/>
    </location>
</feature>
<name>TDH_YERPA</name>
<protein>
    <recommendedName>
        <fullName evidence="1">L-threonine 3-dehydrogenase</fullName>
        <shortName evidence="1">TDH</shortName>
        <ecNumber evidence="1">1.1.1.103</ecNumber>
    </recommendedName>
</protein>
<comment type="function">
    <text evidence="1">Catalyzes the NAD(+)-dependent oxidation of L-threonine to 2-amino-3-ketobutyrate.</text>
</comment>
<comment type="catalytic activity">
    <reaction evidence="1">
        <text>L-threonine + NAD(+) = (2S)-2-amino-3-oxobutanoate + NADH + H(+)</text>
        <dbReference type="Rhea" id="RHEA:13161"/>
        <dbReference type="ChEBI" id="CHEBI:15378"/>
        <dbReference type="ChEBI" id="CHEBI:57540"/>
        <dbReference type="ChEBI" id="CHEBI:57926"/>
        <dbReference type="ChEBI" id="CHEBI:57945"/>
        <dbReference type="ChEBI" id="CHEBI:78948"/>
        <dbReference type="EC" id="1.1.1.103"/>
    </reaction>
</comment>
<comment type="cofactor">
    <cofactor evidence="1">
        <name>Zn(2+)</name>
        <dbReference type="ChEBI" id="CHEBI:29105"/>
    </cofactor>
    <text evidence="1">Binds 2 Zn(2+) ions per subunit.</text>
</comment>
<comment type="pathway">
    <text evidence="1">Amino-acid degradation; L-threonine degradation via oxydo-reductase pathway; glycine from L-threonine: step 1/2.</text>
</comment>
<comment type="subunit">
    <text evidence="1">Homotetramer.</text>
</comment>
<comment type="subcellular location">
    <subcellularLocation>
        <location evidence="1">Cytoplasm</location>
    </subcellularLocation>
</comment>
<comment type="similarity">
    <text evidence="1">Belongs to the zinc-containing alcohol dehydrogenase family.</text>
</comment>
<keyword id="KW-0963">Cytoplasm</keyword>
<keyword id="KW-0479">Metal-binding</keyword>
<keyword id="KW-0520">NAD</keyword>
<keyword id="KW-0560">Oxidoreductase</keyword>
<keyword id="KW-0862">Zinc</keyword>
<gene>
    <name evidence="1" type="primary">tdh</name>
    <name type="ordered locus">YPA_3482</name>
</gene>
<organism>
    <name type="scientific">Yersinia pestis bv. Antiqua (strain Antiqua)</name>
    <dbReference type="NCBI Taxonomy" id="360102"/>
    <lineage>
        <taxon>Bacteria</taxon>
        <taxon>Pseudomonadati</taxon>
        <taxon>Pseudomonadota</taxon>
        <taxon>Gammaproteobacteria</taxon>
        <taxon>Enterobacterales</taxon>
        <taxon>Yersiniaceae</taxon>
        <taxon>Yersinia</taxon>
    </lineage>
</organism>
<proteinExistence type="inferred from homology"/>
<reference key="1">
    <citation type="journal article" date="2006" name="J. Bacteriol.">
        <title>Complete genome sequence of Yersinia pestis strains Antiqua and Nepal516: evidence of gene reduction in an emerging pathogen.</title>
        <authorList>
            <person name="Chain P.S.G."/>
            <person name="Hu P."/>
            <person name="Malfatti S.A."/>
            <person name="Radnedge L."/>
            <person name="Larimer F."/>
            <person name="Vergez L.M."/>
            <person name="Worsham P."/>
            <person name="Chu M.C."/>
            <person name="Andersen G.L."/>
        </authorList>
    </citation>
    <scope>NUCLEOTIDE SEQUENCE [LARGE SCALE GENOMIC DNA]</scope>
    <source>
        <strain>Antiqua</strain>
    </source>
</reference>
<dbReference type="EC" id="1.1.1.103" evidence="1"/>
<dbReference type="EMBL" id="CP000308">
    <property type="protein sequence ID" value="ABG15444.1"/>
    <property type="molecule type" value="Genomic_DNA"/>
</dbReference>
<dbReference type="RefSeq" id="WP_002208981.1">
    <property type="nucleotide sequence ID" value="NZ_CP009906.1"/>
</dbReference>
<dbReference type="SMR" id="Q1C278"/>
<dbReference type="GeneID" id="57974530"/>
<dbReference type="KEGG" id="ypa:YPA_3482"/>
<dbReference type="UniPathway" id="UPA00046">
    <property type="reaction ID" value="UER00505"/>
</dbReference>
<dbReference type="Proteomes" id="UP000001971">
    <property type="component" value="Chromosome"/>
</dbReference>
<dbReference type="GO" id="GO:0005737">
    <property type="term" value="C:cytoplasm"/>
    <property type="evidence" value="ECO:0007669"/>
    <property type="project" value="UniProtKB-SubCell"/>
</dbReference>
<dbReference type="GO" id="GO:0008743">
    <property type="term" value="F:L-threonine 3-dehydrogenase activity"/>
    <property type="evidence" value="ECO:0007669"/>
    <property type="project" value="UniProtKB-UniRule"/>
</dbReference>
<dbReference type="GO" id="GO:0008270">
    <property type="term" value="F:zinc ion binding"/>
    <property type="evidence" value="ECO:0007669"/>
    <property type="project" value="UniProtKB-UniRule"/>
</dbReference>
<dbReference type="GO" id="GO:0019518">
    <property type="term" value="P:L-threonine catabolic process to glycine"/>
    <property type="evidence" value="ECO:0007669"/>
    <property type="project" value="UniProtKB-UniPathway"/>
</dbReference>
<dbReference type="FunFam" id="3.40.50.720:FF:000059">
    <property type="entry name" value="L-threonine 3-dehydrogenase"/>
    <property type="match status" value="1"/>
</dbReference>
<dbReference type="Gene3D" id="3.90.180.10">
    <property type="entry name" value="Medium-chain alcohol dehydrogenases, catalytic domain"/>
    <property type="match status" value="1"/>
</dbReference>
<dbReference type="Gene3D" id="3.40.50.720">
    <property type="entry name" value="NAD(P)-binding Rossmann-like Domain"/>
    <property type="match status" value="1"/>
</dbReference>
<dbReference type="HAMAP" id="MF_00627">
    <property type="entry name" value="Thr_dehydrog"/>
    <property type="match status" value="1"/>
</dbReference>
<dbReference type="InterPro" id="IPR013149">
    <property type="entry name" value="ADH-like_C"/>
</dbReference>
<dbReference type="InterPro" id="IPR013154">
    <property type="entry name" value="ADH-like_N"/>
</dbReference>
<dbReference type="InterPro" id="IPR002328">
    <property type="entry name" value="ADH_Zn_CS"/>
</dbReference>
<dbReference type="InterPro" id="IPR011032">
    <property type="entry name" value="GroES-like_sf"/>
</dbReference>
<dbReference type="InterPro" id="IPR004627">
    <property type="entry name" value="L-Threonine_3-DHase"/>
</dbReference>
<dbReference type="InterPro" id="IPR036291">
    <property type="entry name" value="NAD(P)-bd_dom_sf"/>
</dbReference>
<dbReference type="InterPro" id="IPR020843">
    <property type="entry name" value="PKS_ER"/>
</dbReference>
<dbReference type="InterPro" id="IPR050129">
    <property type="entry name" value="Zn_alcohol_dh"/>
</dbReference>
<dbReference type="NCBIfam" id="NF003808">
    <property type="entry name" value="PRK05396.1"/>
    <property type="match status" value="1"/>
</dbReference>
<dbReference type="NCBIfam" id="TIGR00692">
    <property type="entry name" value="tdh"/>
    <property type="match status" value="1"/>
</dbReference>
<dbReference type="PANTHER" id="PTHR43401">
    <property type="entry name" value="L-THREONINE 3-DEHYDROGENASE"/>
    <property type="match status" value="1"/>
</dbReference>
<dbReference type="PANTHER" id="PTHR43401:SF2">
    <property type="entry name" value="L-THREONINE 3-DEHYDROGENASE"/>
    <property type="match status" value="1"/>
</dbReference>
<dbReference type="Pfam" id="PF08240">
    <property type="entry name" value="ADH_N"/>
    <property type="match status" value="1"/>
</dbReference>
<dbReference type="Pfam" id="PF00107">
    <property type="entry name" value="ADH_zinc_N"/>
    <property type="match status" value="1"/>
</dbReference>
<dbReference type="SMART" id="SM00829">
    <property type="entry name" value="PKS_ER"/>
    <property type="match status" value="1"/>
</dbReference>
<dbReference type="SUPFAM" id="SSF50129">
    <property type="entry name" value="GroES-like"/>
    <property type="match status" value="1"/>
</dbReference>
<dbReference type="SUPFAM" id="SSF51735">
    <property type="entry name" value="NAD(P)-binding Rossmann-fold domains"/>
    <property type="match status" value="1"/>
</dbReference>
<dbReference type="PROSITE" id="PS00059">
    <property type="entry name" value="ADH_ZINC"/>
    <property type="match status" value="1"/>
</dbReference>
<accession>Q1C278</accession>